<sequence>MIPPEIRRSVLLQKAIKLALAGTLLTFASFSATAADPSSDTETPQPPDILLGPLFNDVQNAKLFPDQKTFADAIPNSDPLMILADYRMQRNQSGFDLRHFVDVNFTLPKAGEKYVPPAGQSLREHIDGLWPVLTRSTKNVEKWDSLLPLPESYVVPGGRFREIYYWDSYFTMLGLAESGHWDKVADMVANFGYEIDAWGHIPNGNRTYYLSRSQPPFFAFMVELLAQHEGDDALKEYLPQLQKEYAYWMEGVETLQPGQQNQRVVKLEDGSVLNRYWDDRDTPRPESWVEDIATVKSNPNRPATEIYRDLRSAAASGWDFSSRWMDNPQQLSTIRTTTIVPVDLNALLYQLEKTLARASAAAGDRAKASHYDALANARQKAIEMHLWNNKEGWYADYDLKNNKIRDQLTAAALFPLYVNAAAKDRAAKVAAAAQAHLLQPGGLATTSVKSGQQWDAPNGWAPLQWVAAEGLQNYGQDDVAMEVTWRFLTNVQHTYDREKKLVEKYDVSSTGTGGGGGEYPLQDGFGWTNGVTLKMLDLICPQEKPCDSVPSTRPASLSATPTKTPSAATQ</sequence>
<accession>B5R2X4</accession>
<name>TREA_SALEP</name>
<evidence type="ECO:0000255" key="1">
    <source>
        <dbReference type="HAMAP-Rule" id="MF_01060"/>
    </source>
</evidence>
<evidence type="ECO:0000256" key="2">
    <source>
        <dbReference type="SAM" id="MobiDB-lite"/>
    </source>
</evidence>
<reference key="1">
    <citation type="journal article" date="2008" name="Genome Res.">
        <title>Comparative genome analysis of Salmonella enteritidis PT4 and Salmonella gallinarum 287/91 provides insights into evolutionary and host adaptation pathways.</title>
        <authorList>
            <person name="Thomson N.R."/>
            <person name="Clayton D.J."/>
            <person name="Windhorst D."/>
            <person name="Vernikos G."/>
            <person name="Davidson S."/>
            <person name="Churcher C."/>
            <person name="Quail M.A."/>
            <person name="Stevens M."/>
            <person name="Jones M.A."/>
            <person name="Watson M."/>
            <person name="Barron A."/>
            <person name="Layton A."/>
            <person name="Pickard D."/>
            <person name="Kingsley R.A."/>
            <person name="Bignell A."/>
            <person name="Clark L."/>
            <person name="Harris B."/>
            <person name="Ormond D."/>
            <person name="Abdellah Z."/>
            <person name="Brooks K."/>
            <person name="Cherevach I."/>
            <person name="Chillingworth T."/>
            <person name="Woodward J."/>
            <person name="Norberczak H."/>
            <person name="Lord A."/>
            <person name="Arrowsmith C."/>
            <person name="Jagels K."/>
            <person name="Moule S."/>
            <person name="Mungall K."/>
            <person name="Saunders M."/>
            <person name="Whitehead S."/>
            <person name="Chabalgoity J.A."/>
            <person name="Maskell D."/>
            <person name="Humphreys T."/>
            <person name="Roberts M."/>
            <person name="Barrow P.A."/>
            <person name="Dougan G."/>
            <person name="Parkhill J."/>
        </authorList>
    </citation>
    <scope>NUCLEOTIDE SEQUENCE [LARGE SCALE GENOMIC DNA]</scope>
    <source>
        <strain>P125109</strain>
    </source>
</reference>
<dbReference type="EC" id="3.2.1.28" evidence="1"/>
<dbReference type="EMBL" id="AM933172">
    <property type="protein sequence ID" value="CAR32821.1"/>
    <property type="molecule type" value="Genomic_DNA"/>
</dbReference>
<dbReference type="RefSeq" id="WP_000612838.1">
    <property type="nucleotide sequence ID" value="NC_011294.1"/>
</dbReference>
<dbReference type="SMR" id="B5R2X4"/>
<dbReference type="CAZy" id="GH37">
    <property type="family name" value="Glycoside Hydrolase Family 37"/>
</dbReference>
<dbReference type="KEGG" id="set:SEN1241"/>
<dbReference type="HOGENOM" id="CLU_006451_3_1_6"/>
<dbReference type="Proteomes" id="UP000000613">
    <property type="component" value="Chromosome"/>
</dbReference>
<dbReference type="GO" id="GO:0042597">
    <property type="term" value="C:periplasmic space"/>
    <property type="evidence" value="ECO:0007669"/>
    <property type="project" value="UniProtKB-SubCell"/>
</dbReference>
<dbReference type="GO" id="GO:0004555">
    <property type="term" value="F:alpha,alpha-trehalase activity"/>
    <property type="evidence" value="ECO:0007669"/>
    <property type="project" value="UniProtKB-UniRule"/>
</dbReference>
<dbReference type="GO" id="GO:0071474">
    <property type="term" value="P:cellular hyperosmotic response"/>
    <property type="evidence" value="ECO:0007669"/>
    <property type="project" value="InterPro"/>
</dbReference>
<dbReference type="GO" id="GO:0005993">
    <property type="term" value="P:trehalose catabolic process"/>
    <property type="evidence" value="ECO:0007669"/>
    <property type="project" value="InterPro"/>
</dbReference>
<dbReference type="FunFam" id="1.50.10.10:FF:000003">
    <property type="entry name" value="Cytoplasmic trehalase"/>
    <property type="match status" value="1"/>
</dbReference>
<dbReference type="Gene3D" id="1.50.10.10">
    <property type="match status" value="1"/>
</dbReference>
<dbReference type="HAMAP" id="MF_01060">
    <property type="entry name" value="Peripl_trehalase"/>
    <property type="match status" value="1"/>
</dbReference>
<dbReference type="InterPro" id="IPR008928">
    <property type="entry name" value="6-hairpin_glycosidase_sf"/>
</dbReference>
<dbReference type="InterPro" id="IPR012341">
    <property type="entry name" value="6hp_glycosidase-like_sf"/>
</dbReference>
<dbReference type="InterPro" id="IPR001661">
    <property type="entry name" value="Glyco_hydro_37"/>
</dbReference>
<dbReference type="InterPro" id="IPR018232">
    <property type="entry name" value="Glyco_hydro_37_CS"/>
</dbReference>
<dbReference type="InterPro" id="IPR023720">
    <property type="entry name" value="Trehalase_periplasmic"/>
</dbReference>
<dbReference type="NCBIfam" id="NF009773">
    <property type="entry name" value="PRK13270.1"/>
    <property type="match status" value="1"/>
</dbReference>
<dbReference type="NCBIfam" id="NF009774">
    <property type="entry name" value="PRK13271.1"/>
    <property type="match status" value="1"/>
</dbReference>
<dbReference type="PANTHER" id="PTHR23403">
    <property type="entry name" value="TREHALASE"/>
    <property type="match status" value="1"/>
</dbReference>
<dbReference type="PANTHER" id="PTHR23403:SF1">
    <property type="entry name" value="TREHALASE"/>
    <property type="match status" value="1"/>
</dbReference>
<dbReference type="Pfam" id="PF01204">
    <property type="entry name" value="Trehalase"/>
    <property type="match status" value="1"/>
</dbReference>
<dbReference type="PRINTS" id="PR00744">
    <property type="entry name" value="GLHYDRLASE37"/>
</dbReference>
<dbReference type="SUPFAM" id="SSF48208">
    <property type="entry name" value="Six-hairpin glycosidases"/>
    <property type="match status" value="1"/>
</dbReference>
<dbReference type="PROSITE" id="PS00927">
    <property type="entry name" value="TREHALASE_1"/>
    <property type="match status" value="1"/>
</dbReference>
<dbReference type="PROSITE" id="PS00928">
    <property type="entry name" value="TREHALASE_2"/>
    <property type="match status" value="1"/>
</dbReference>
<gene>
    <name evidence="1" type="primary">treA</name>
    <name type="ordered locus">SEN1241</name>
</gene>
<feature type="signal peptide" evidence="1">
    <location>
        <begin position="1"/>
        <end position="34"/>
    </location>
</feature>
<feature type="chain" id="PRO_5000397754" description="Periplasmic trehalase">
    <location>
        <begin position="35"/>
        <end position="570"/>
    </location>
</feature>
<feature type="region of interest" description="Disordered" evidence="2">
    <location>
        <begin position="544"/>
        <end position="570"/>
    </location>
</feature>
<feature type="compositionally biased region" description="Low complexity" evidence="2">
    <location>
        <begin position="554"/>
        <end position="570"/>
    </location>
</feature>
<feature type="active site" description="Proton donor/acceptor" evidence="1">
    <location>
        <position position="319"/>
    </location>
</feature>
<feature type="active site" description="Proton donor/acceptor" evidence="1">
    <location>
        <position position="503"/>
    </location>
</feature>
<feature type="binding site" evidence="1">
    <location>
        <position position="159"/>
    </location>
    <ligand>
        <name>substrate</name>
    </ligand>
</feature>
<feature type="binding site" evidence="1">
    <location>
        <begin position="166"/>
        <end position="167"/>
    </location>
    <ligand>
        <name>substrate</name>
    </ligand>
</feature>
<feature type="binding site" evidence="1">
    <location>
        <position position="203"/>
    </location>
    <ligand>
        <name>substrate</name>
    </ligand>
</feature>
<feature type="binding site" evidence="1">
    <location>
        <begin position="212"/>
        <end position="214"/>
    </location>
    <ligand>
        <name>substrate</name>
    </ligand>
</feature>
<feature type="binding site" evidence="1">
    <location>
        <begin position="284"/>
        <end position="286"/>
    </location>
    <ligand>
        <name>substrate</name>
    </ligand>
</feature>
<feature type="binding site" evidence="1">
    <location>
        <position position="317"/>
    </location>
    <ligand>
        <name>substrate</name>
    </ligand>
</feature>
<feature type="binding site" evidence="1">
    <location>
        <position position="518"/>
    </location>
    <ligand>
        <name>substrate</name>
    </ligand>
</feature>
<keyword id="KW-0326">Glycosidase</keyword>
<keyword id="KW-0378">Hydrolase</keyword>
<keyword id="KW-0574">Periplasm</keyword>
<keyword id="KW-0732">Signal</keyword>
<comment type="function">
    <text evidence="1">Provides the cells with the ability to utilize trehalose at high osmolarity by splitting it into glucose molecules that can subsequently be taken up by the phosphotransferase-mediated uptake system.</text>
</comment>
<comment type="catalytic activity">
    <reaction evidence="1">
        <text>alpha,alpha-trehalose + H2O = alpha-D-glucose + beta-D-glucose</text>
        <dbReference type="Rhea" id="RHEA:32675"/>
        <dbReference type="ChEBI" id="CHEBI:15377"/>
        <dbReference type="ChEBI" id="CHEBI:15903"/>
        <dbReference type="ChEBI" id="CHEBI:16551"/>
        <dbReference type="ChEBI" id="CHEBI:17925"/>
        <dbReference type="EC" id="3.2.1.28"/>
    </reaction>
</comment>
<comment type="subunit">
    <text evidence="1">Monomer.</text>
</comment>
<comment type="subcellular location">
    <subcellularLocation>
        <location evidence="1">Periplasm</location>
    </subcellularLocation>
</comment>
<comment type="similarity">
    <text evidence="1">Belongs to the glycosyl hydrolase 37 family.</text>
</comment>
<proteinExistence type="inferred from homology"/>
<protein>
    <recommendedName>
        <fullName evidence="1">Periplasmic trehalase</fullName>
        <ecNumber evidence="1">3.2.1.28</ecNumber>
    </recommendedName>
    <alternativeName>
        <fullName evidence="1">Alpha,alpha-trehalase</fullName>
    </alternativeName>
    <alternativeName>
        <fullName evidence="1">Alpha,alpha-trehalose glucohydrolase</fullName>
    </alternativeName>
</protein>
<organism>
    <name type="scientific">Salmonella enteritidis PT4 (strain P125109)</name>
    <dbReference type="NCBI Taxonomy" id="550537"/>
    <lineage>
        <taxon>Bacteria</taxon>
        <taxon>Pseudomonadati</taxon>
        <taxon>Pseudomonadota</taxon>
        <taxon>Gammaproteobacteria</taxon>
        <taxon>Enterobacterales</taxon>
        <taxon>Enterobacteriaceae</taxon>
        <taxon>Salmonella</taxon>
    </lineage>
</organism>